<evidence type="ECO:0000250" key="1">
    <source>
        <dbReference type="UniProtKB" id="Q8IW50"/>
    </source>
</evidence>
<evidence type="ECO:0000256" key="2">
    <source>
        <dbReference type="SAM" id="MobiDB-lite"/>
    </source>
</evidence>
<evidence type="ECO:0000305" key="3"/>
<evidence type="ECO:0007744" key="4">
    <source>
    </source>
</evidence>
<accession>Q9D772</accession>
<accession>A2ANP3</accession>
<sequence length="157" mass="17464">MMEEIDRFQDPAAASISDRDCDAREEKQRELARKGSLKNGSMGSPVNQQPKKNNVMARTRLVVPNKGYSSLDQSPDEKPLVALDTDSDDDFDMSRYSSSGYSSAEQINQDLNIQLLKDGYRLDEIPDDEDLDLIPPKSVNPTCMCCQATSSTACHIQ</sequence>
<name>F219A_MOUSE</name>
<proteinExistence type="evidence at protein level"/>
<keyword id="KW-0007">Acetylation</keyword>
<keyword id="KW-0597">Phosphoprotein</keyword>
<keyword id="KW-1185">Reference proteome</keyword>
<protein>
    <recommendedName>
        <fullName>Protein FAM219A</fullName>
    </recommendedName>
</protein>
<dbReference type="EMBL" id="AK009522">
    <property type="protein sequence ID" value="BAB26337.1"/>
    <property type="molecule type" value="mRNA"/>
</dbReference>
<dbReference type="EMBL" id="AL831723">
    <property type="status" value="NOT_ANNOTATED_CDS"/>
    <property type="molecule type" value="Genomic_DNA"/>
</dbReference>
<dbReference type="EMBL" id="CH466538">
    <property type="protein sequence ID" value="EDL05397.1"/>
    <property type="molecule type" value="Genomic_DNA"/>
</dbReference>
<dbReference type="EMBL" id="BC172167">
    <property type="protein sequence ID" value="AAI72167.1"/>
    <property type="molecule type" value="mRNA"/>
</dbReference>
<dbReference type="CCDS" id="CCDS38718.1"/>
<dbReference type="RefSeq" id="NP_001153055.1">
    <property type="nucleotide sequence ID" value="NM_001159583.1"/>
</dbReference>
<dbReference type="RefSeq" id="NP_082269.2">
    <property type="nucleotide sequence ID" value="NM_027993.4"/>
</dbReference>
<dbReference type="BioGRID" id="215016">
    <property type="interactions" value="1"/>
</dbReference>
<dbReference type="FunCoup" id="Q9D772">
    <property type="interactions" value="84"/>
</dbReference>
<dbReference type="STRING" id="10090.ENSMUSP00000103687"/>
<dbReference type="iPTMnet" id="Q9D772"/>
<dbReference type="PhosphoSitePlus" id="Q9D772"/>
<dbReference type="SwissPalm" id="Q9D772"/>
<dbReference type="PaxDb" id="10090-ENSMUSP00000103687"/>
<dbReference type="ProteomicsDB" id="277021"/>
<dbReference type="Antibodypedia" id="11236">
    <property type="antibodies" value="79 antibodies from 16 providers"/>
</dbReference>
<dbReference type="Ensembl" id="ENSMUST00000108049.9">
    <property type="protein sequence ID" value="ENSMUSP00000103684.3"/>
    <property type="gene ID" value="ENSMUSG00000028439.15"/>
</dbReference>
<dbReference type="GeneID" id="71901"/>
<dbReference type="KEGG" id="mmu:71901"/>
<dbReference type="UCSC" id="uc008siz.2">
    <property type="organism name" value="mouse"/>
</dbReference>
<dbReference type="AGR" id="MGI:1919151"/>
<dbReference type="CTD" id="203259"/>
<dbReference type="MGI" id="MGI:1919151">
    <property type="gene designation" value="Fam219a"/>
</dbReference>
<dbReference type="VEuPathDB" id="HostDB:ENSMUSG00000028439"/>
<dbReference type="eggNOG" id="ENOG502QS86">
    <property type="taxonomic scope" value="Eukaryota"/>
</dbReference>
<dbReference type="GeneTree" id="ENSGT00390000000860"/>
<dbReference type="HOGENOM" id="CLU_118636_0_0_1"/>
<dbReference type="InParanoid" id="Q9D772"/>
<dbReference type="OrthoDB" id="6119141at2759"/>
<dbReference type="BioGRID-ORCS" id="71901">
    <property type="hits" value="1 hit in 44 CRISPR screens"/>
</dbReference>
<dbReference type="ChiTaRS" id="Fam219a">
    <property type="organism name" value="mouse"/>
</dbReference>
<dbReference type="PRO" id="PR:Q9D772"/>
<dbReference type="Proteomes" id="UP000000589">
    <property type="component" value="Chromosome 4"/>
</dbReference>
<dbReference type="RNAct" id="Q9D772">
    <property type="molecule type" value="protein"/>
</dbReference>
<dbReference type="Bgee" id="ENSMUSG00000028439">
    <property type="expression patterns" value="Expressed in primary visual cortex and 64 other cell types or tissues"/>
</dbReference>
<dbReference type="ExpressionAtlas" id="Q9D772">
    <property type="expression patterns" value="baseline and differential"/>
</dbReference>
<dbReference type="InterPro" id="IPR029339">
    <property type="entry name" value="FAM219"/>
</dbReference>
<dbReference type="PANTHER" id="PTHR31281">
    <property type="entry name" value="PROTEIN FAM219A"/>
    <property type="match status" value="1"/>
</dbReference>
<dbReference type="PANTHER" id="PTHR31281:SF0">
    <property type="entry name" value="PROTEIN FAM219A"/>
    <property type="match status" value="1"/>
</dbReference>
<dbReference type="Pfam" id="PF15260">
    <property type="entry name" value="FAM219A"/>
    <property type="match status" value="1"/>
</dbReference>
<gene>
    <name type="primary">Fam219a</name>
</gene>
<feature type="chain" id="PRO_0000089678" description="Protein FAM219A">
    <location>
        <begin position="1"/>
        <end position="157"/>
    </location>
</feature>
<feature type="region of interest" description="Disordered" evidence="2">
    <location>
        <begin position="1"/>
        <end position="103"/>
    </location>
</feature>
<feature type="compositionally biased region" description="Basic and acidic residues" evidence="2">
    <location>
        <begin position="17"/>
        <end position="33"/>
    </location>
</feature>
<feature type="compositionally biased region" description="Polar residues" evidence="2">
    <location>
        <begin position="38"/>
        <end position="52"/>
    </location>
</feature>
<feature type="compositionally biased region" description="Low complexity" evidence="2">
    <location>
        <begin position="94"/>
        <end position="103"/>
    </location>
</feature>
<feature type="modified residue" description="N-acetylmethionine" evidence="1">
    <location>
        <position position="1"/>
    </location>
</feature>
<feature type="modified residue" description="Phosphoserine" evidence="4">
    <location>
        <position position="44"/>
    </location>
</feature>
<feature type="modified residue" description="Phosphoserine" evidence="1">
    <location>
        <position position="74"/>
    </location>
</feature>
<feature type="modified residue" description="Phosphothreonine" evidence="4">
    <location>
        <position position="85"/>
    </location>
</feature>
<feature type="modified residue" description="Phosphoserine" evidence="4">
    <location>
        <position position="87"/>
    </location>
</feature>
<feature type="modified residue" description="Phosphoserine" evidence="1">
    <location>
        <position position="94"/>
    </location>
</feature>
<feature type="sequence conflict" description="In Ref. 1; BAB26337." evidence="3" ref="1">
    <original>K</original>
    <variation>R</variation>
    <location>
        <position position="66"/>
    </location>
</feature>
<organism>
    <name type="scientific">Mus musculus</name>
    <name type="common">Mouse</name>
    <dbReference type="NCBI Taxonomy" id="10090"/>
    <lineage>
        <taxon>Eukaryota</taxon>
        <taxon>Metazoa</taxon>
        <taxon>Chordata</taxon>
        <taxon>Craniata</taxon>
        <taxon>Vertebrata</taxon>
        <taxon>Euteleostomi</taxon>
        <taxon>Mammalia</taxon>
        <taxon>Eutheria</taxon>
        <taxon>Euarchontoglires</taxon>
        <taxon>Glires</taxon>
        <taxon>Rodentia</taxon>
        <taxon>Myomorpha</taxon>
        <taxon>Muroidea</taxon>
        <taxon>Muridae</taxon>
        <taxon>Murinae</taxon>
        <taxon>Mus</taxon>
        <taxon>Mus</taxon>
    </lineage>
</organism>
<comment type="similarity">
    <text evidence="3">Belongs to the FAM219 family.</text>
</comment>
<reference key="1">
    <citation type="journal article" date="2005" name="Science">
        <title>The transcriptional landscape of the mammalian genome.</title>
        <authorList>
            <person name="Carninci P."/>
            <person name="Kasukawa T."/>
            <person name="Katayama S."/>
            <person name="Gough J."/>
            <person name="Frith M.C."/>
            <person name="Maeda N."/>
            <person name="Oyama R."/>
            <person name="Ravasi T."/>
            <person name="Lenhard B."/>
            <person name="Wells C."/>
            <person name="Kodzius R."/>
            <person name="Shimokawa K."/>
            <person name="Bajic V.B."/>
            <person name="Brenner S.E."/>
            <person name="Batalov S."/>
            <person name="Forrest A.R."/>
            <person name="Zavolan M."/>
            <person name="Davis M.J."/>
            <person name="Wilming L.G."/>
            <person name="Aidinis V."/>
            <person name="Allen J.E."/>
            <person name="Ambesi-Impiombato A."/>
            <person name="Apweiler R."/>
            <person name="Aturaliya R.N."/>
            <person name="Bailey T.L."/>
            <person name="Bansal M."/>
            <person name="Baxter L."/>
            <person name="Beisel K.W."/>
            <person name="Bersano T."/>
            <person name="Bono H."/>
            <person name="Chalk A.M."/>
            <person name="Chiu K.P."/>
            <person name="Choudhary V."/>
            <person name="Christoffels A."/>
            <person name="Clutterbuck D.R."/>
            <person name="Crowe M.L."/>
            <person name="Dalla E."/>
            <person name="Dalrymple B.P."/>
            <person name="de Bono B."/>
            <person name="Della Gatta G."/>
            <person name="di Bernardo D."/>
            <person name="Down T."/>
            <person name="Engstrom P."/>
            <person name="Fagiolini M."/>
            <person name="Faulkner G."/>
            <person name="Fletcher C.F."/>
            <person name="Fukushima T."/>
            <person name="Furuno M."/>
            <person name="Futaki S."/>
            <person name="Gariboldi M."/>
            <person name="Georgii-Hemming P."/>
            <person name="Gingeras T.R."/>
            <person name="Gojobori T."/>
            <person name="Green R.E."/>
            <person name="Gustincich S."/>
            <person name="Harbers M."/>
            <person name="Hayashi Y."/>
            <person name="Hensch T.K."/>
            <person name="Hirokawa N."/>
            <person name="Hill D."/>
            <person name="Huminiecki L."/>
            <person name="Iacono M."/>
            <person name="Ikeo K."/>
            <person name="Iwama A."/>
            <person name="Ishikawa T."/>
            <person name="Jakt M."/>
            <person name="Kanapin A."/>
            <person name="Katoh M."/>
            <person name="Kawasawa Y."/>
            <person name="Kelso J."/>
            <person name="Kitamura H."/>
            <person name="Kitano H."/>
            <person name="Kollias G."/>
            <person name="Krishnan S.P."/>
            <person name="Kruger A."/>
            <person name="Kummerfeld S.K."/>
            <person name="Kurochkin I.V."/>
            <person name="Lareau L.F."/>
            <person name="Lazarevic D."/>
            <person name="Lipovich L."/>
            <person name="Liu J."/>
            <person name="Liuni S."/>
            <person name="McWilliam S."/>
            <person name="Madan Babu M."/>
            <person name="Madera M."/>
            <person name="Marchionni L."/>
            <person name="Matsuda H."/>
            <person name="Matsuzawa S."/>
            <person name="Miki H."/>
            <person name="Mignone F."/>
            <person name="Miyake S."/>
            <person name="Morris K."/>
            <person name="Mottagui-Tabar S."/>
            <person name="Mulder N."/>
            <person name="Nakano N."/>
            <person name="Nakauchi H."/>
            <person name="Ng P."/>
            <person name="Nilsson R."/>
            <person name="Nishiguchi S."/>
            <person name="Nishikawa S."/>
            <person name="Nori F."/>
            <person name="Ohara O."/>
            <person name="Okazaki Y."/>
            <person name="Orlando V."/>
            <person name="Pang K.C."/>
            <person name="Pavan W.J."/>
            <person name="Pavesi G."/>
            <person name="Pesole G."/>
            <person name="Petrovsky N."/>
            <person name="Piazza S."/>
            <person name="Reed J."/>
            <person name="Reid J.F."/>
            <person name="Ring B.Z."/>
            <person name="Ringwald M."/>
            <person name="Rost B."/>
            <person name="Ruan Y."/>
            <person name="Salzberg S.L."/>
            <person name="Sandelin A."/>
            <person name="Schneider C."/>
            <person name="Schoenbach C."/>
            <person name="Sekiguchi K."/>
            <person name="Semple C.A."/>
            <person name="Seno S."/>
            <person name="Sessa L."/>
            <person name="Sheng Y."/>
            <person name="Shibata Y."/>
            <person name="Shimada H."/>
            <person name="Shimada K."/>
            <person name="Silva D."/>
            <person name="Sinclair B."/>
            <person name="Sperling S."/>
            <person name="Stupka E."/>
            <person name="Sugiura K."/>
            <person name="Sultana R."/>
            <person name="Takenaka Y."/>
            <person name="Taki K."/>
            <person name="Tammoja K."/>
            <person name="Tan S.L."/>
            <person name="Tang S."/>
            <person name="Taylor M.S."/>
            <person name="Tegner J."/>
            <person name="Teichmann S.A."/>
            <person name="Ueda H.R."/>
            <person name="van Nimwegen E."/>
            <person name="Verardo R."/>
            <person name="Wei C.L."/>
            <person name="Yagi K."/>
            <person name="Yamanishi H."/>
            <person name="Zabarovsky E."/>
            <person name="Zhu S."/>
            <person name="Zimmer A."/>
            <person name="Hide W."/>
            <person name="Bult C."/>
            <person name="Grimmond S.M."/>
            <person name="Teasdale R.D."/>
            <person name="Liu E.T."/>
            <person name="Brusic V."/>
            <person name="Quackenbush J."/>
            <person name="Wahlestedt C."/>
            <person name="Mattick J.S."/>
            <person name="Hume D.A."/>
            <person name="Kai C."/>
            <person name="Sasaki D."/>
            <person name="Tomaru Y."/>
            <person name="Fukuda S."/>
            <person name="Kanamori-Katayama M."/>
            <person name="Suzuki M."/>
            <person name="Aoki J."/>
            <person name="Arakawa T."/>
            <person name="Iida J."/>
            <person name="Imamura K."/>
            <person name="Itoh M."/>
            <person name="Kato T."/>
            <person name="Kawaji H."/>
            <person name="Kawagashira N."/>
            <person name="Kawashima T."/>
            <person name="Kojima M."/>
            <person name="Kondo S."/>
            <person name="Konno H."/>
            <person name="Nakano K."/>
            <person name="Ninomiya N."/>
            <person name="Nishio T."/>
            <person name="Okada M."/>
            <person name="Plessy C."/>
            <person name="Shibata K."/>
            <person name="Shiraki T."/>
            <person name="Suzuki S."/>
            <person name="Tagami M."/>
            <person name="Waki K."/>
            <person name="Watahiki A."/>
            <person name="Okamura-Oho Y."/>
            <person name="Suzuki H."/>
            <person name="Kawai J."/>
            <person name="Hayashizaki Y."/>
        </authorList>
    </citation>
    <scope>NUCLEOTIDE SEQUENCE [LARGE SCALE MRNA]</scope>
    <source>
        <strain>C57BL/6J</strain>
        <tissue>Tongue</tissue>
    </source>
</reference>
<reference key="2">
    <citation type="journal article" date="2009" name="PLoS Biol.">
        <title>Lineage-specific biology revealed by a finished genome assembly of the mouse.</title>
        <authorList>
            <person name="Church D.M."/>
            <person name="Goodstadt L."/>
            <person name="Hillier L.W."/>
            <person name="Zody M.C."/>
            <person name="Goldstein S."/>
            <person name="She X."/>
            <person name="Bult C.J."/>
            <person name="Agarwala R."/>
            <person name="Cherry J.L."/>
            <person name="DiCuccio M."/>
            <person name="Hlavina W."/>
            <person name="Kapustin Y."/>
            <person name="Meric P."/>
            <person name="Maglott D."/>
            <person name="Birtle Z."/>
            <person name="Marques A.C."/>
            <person name="Graves T."/>
            <person name="Zhou S."/>
            <person name="Teague B."/>
            <person name="Potamousis K."/>
            <person name="Churas C."/>
            <person name="Place M."/>
            <person name="Herschleb J."/>
            <person name="Runnheim R."/>
            <person name="Forrest D."/>
            <person name="Amos-Landgraf J."/>
            <person name="Schwartz D.C."/>
            <person name="Cheng Z."/>
            <person name="Lindblad-Toh K."/>
            <person name="Eichler E.E."/>
            <person name="Ponting C.P."/>
        </authorList>
    </citation>
    <scope>NUCLEOTIDE SEQUENCE [LARGE SCALE GENOMIC DNA]</scope>
    <source>
        <strain>C57BL/6J</strain>
    </source>
</reference>
<reference key="3">
    <citation type="submission" date="2005-07" db="EMBL/GenBank/DDBJ databases">
        <authorList>
            <person name="Mural R.J."/>
            <person name="Adams M.D."/>
            <person name="Myers E.W."/>
            <person name="Smith H.O."/>
            <person name="Venter J.C."/>
        </authorList>
    </citation>
    <scope>NUCLEOTIDE SEQUENCE [LARGE SCALE GENOMIC DNA]</scope>
</reference>
<reference key="4">
    <citation type="journal article" date="2004" name="Genome Res.">
        <title>The status, quality, and expansion of the NIH full-length cDNA project: the Mammalian Gene Collection (MGC).</title>
        <authorList>
            <consortium name="The MGC Project Team"/>
        </authorList>
    </citation>
    <scope>NUCLEOTIDE SEQUENCE [LARGE SCALE MRNA]</scope>
    <source>
        <tissue>Brain</tissue>
    </source>
</reference>
<reference key="5">
    <citation type="journal article" date="2010" name="Cell">
        <title>A tissue-specific atlas of mouse protein phosphorylation and expression.</title>
        <authorList>
            <person name="Huttlin E.L."/>
            <person name="Jedrychowski M.P."/>
            <person name="Elias J.E."/>
            <person name="Goswami T."/>
            <person name="Rad R."/>
            <person name="Beausoleil S.A."/>
            <person name="Villen J."/>
            <person name="Haas W."/>
            <person name="Sowa M.E."/>
            <person name="Gygi S.P."/>
        </authorList>
    </citation>
    <scope>PHOSPHORYLATION [LARGE SCALE ANALYSIS] AT SER-44; THR-85 AND SER-87</scope>
    <scope>IDENTIFICATION BY MASS SPECTROMETRY [LARGE SCALE ANALYSIS]</scope>
    <source>
        <tissue>Brain</tissue>
        <tissue>Kidney</tissue>
        <tissue>Liver</tissue>
        <tissue>Lung</tissue>
        <tissue>Spleen</tissue>
        <tissue>Testis</tissue>
    </source>
</reference>